<protein>
    <recommendedName>
        <fullName evidence="8">Activin receptor type-1-like</fullName>
        <ecNumber>2.7.11.30</ecNumber>
    </recommendedName>
    <alternativeName>
        <fullName>Serine/threonine-protein kinase receptor R3</fullName>
        <shortName>SKR3</shortName>
    </alternativeName>
    <alternativeName>
        <fullName>TGF-B superfamily receptor type I</fullName>
        <shortName>TSR-I</shortName>
    </alternativeName>
</protein>
<keyword id="KW-0037">Angiogenesis</keyword>
<keyword id="KW-0067">ATP-binding</keyword>
<keyword id="KW-1003">Cell membrane</keyword>
<keyword id="KW-1015">Disulfide bond</keyword>
<keyword id="KW-0325">Glycoprotein</keyword>
<keyword id="KW-0418">Kinase</keyword>
<keyword id="KW-0460">Magnesium</keyword>
<keyword id="KW-0464">Manganese</keyword>
<keyword id="KW-0472">Membrane</keyword>
<keyword id="KW-0479">Metal-binding</keyword>
<keyword id="KW-0547">Nucleotide-binding</keyword>
<keyword id="KW-0597">Phosphoprotein</keyword>
<keyword id="KW-0675">Receptor</keyword>
<keyword id="KW-1185">Reference proteome</keyword>
<keyword id="KW-0723">Serine/threonine-protein kinase</keyword>
<keyword id="KW-0732">Signal</keyword>
<keyword id="KW-0808">Transferase</keyword>
<keyword id="KW-0812">Transmembrane</keyword>
<keyword id="KW-1133">Transmembrane helix</keyword>
<sequence length="504" mass="56703">MTLGIFRRVFLMLSVALGLTKGDLVKPSRGQLVNCTCENPHCKRPICQGAWCTVVLVREQGRHPQVYRGCGSLNQELCLGRPTEFVNHHCCYRSFCNHNVSLMLEATQTPSEEPEVDAHLPLILGPVLALLVLVALGTLGLWRVRRRQEKQRGLHSDLGESSLILKASEQGDSMLGDFLVSDCTTGSGSGLPFLVQRTVARQVALVECVGKGRYGEVWRGSWHGESVAVKIFSSRDEQSWFRETEIYNTVLLRHDNILGFIASDMTSRNSSTQLWLITHYHEHGSLYDFLQRQTLEPQLALRLAVSAACGLAHLHVEIFGTQGKPAIAHRDLKSRNVLVKSNLQCCIADLGLAVMHSQSSDYLDIGNNPRVGTKRYMAPEVLDEQIRTDCFESYKWTDIWAFGLVLWEIARRTIINGIVEDYRPPFYDMVPNDPSFEDMKKVVCVDQQTPTIPNRLAADPVLSGLAQMMRECWYPNPSARLTALRIKKTLQKLSQNPEKPKVIH</sequence>
<name>ACVL1_RAT</name>
<accession>P80203</accession>
<accession>Q63559</accession>
<organism>
    <name type="scientific">Rattus norvegicus</name>
    <name type="common">Rat</name>
    <dbReference type="NCBI Taxonomy" id="10116"/>
    <lineage>
        <taxon>Eukaryota</taxon>
        <taxon>Metazoa</taxon>
        <taxon>Chordata</taxon>
        <taxon>Craniata</taxon>
        <taxon>Vertebrata</taxon>
        <taxon>Euteleostomi</taxon>
        <taxon>Mammalia</taxon>
        <taxon>Eutheria</taxon>
        <taxon>Euarchontoglires</taxon>
        <taxon>Glires</taxon>
        <taxon>Rodentia</taxon>
        <taxon>Myomorpha</taxon>
        <taxon>Muroidea</taxon>
        <taxon>Muridae</taxon>
        <taxon>Murinae</taxon>
        <taxon>Rattus</taxon>
    </lineage>
</organism>
<evidence type="ECO:0000250" key="1"/>
<evidence type="ECO:0000250" key="2">
    <source>
        <dbReference type="UniProtKB" id="P37023"/>
    </source>
</evidence>
<evidence type="ECO:0000255" key="3"/>
<evidence type="ECO:0000255" key="4">
    <source>
        <dbReference type="PROSITE-ProRule" id="PRU00159"/>
    </source>
</evidence>
<evidence type="ECO:0000255" key="5">
    <source>
        <dbReference type="PROSITE-ProRule" id="PRU00585"/>
    </source>
</evidence>
<evidence type="ECO:0000255" key="6">
    <source>
        <dbReference type="PROSITE-ProRule" id="PRU10027"/>
    </source>
</evidence>
<evidence type="ECO:0000269" key="7">
    <source>
    </source>
</evidence>
<evidence type="ECO:0000305" key="8"/>
<evidence type="ECO:0007744" key="9">
    <source>
    </source>
</evidence>
<gene>
    <name type="primary">Acvrl1</name>
    <name type="synonym">Acvrlk1</name>
</gene>
<proteinExistence type="evidence at protein level"/>
<comment type="function">
    <text evidence="2">Type I receptor for TGF-beta family ligands BMP9/GDF2 and BMP10 and important regulator of normal blood vessel development. On ligand binding, forms a receptor complex consisting of two type II and two type I transmembrane serine/threonine kinases. Type II receptors phosphorylate and activate type I receptors which autophosphorylate, then bind and activate SMAD transcriptional regulators. May bind activin as well.</text>
</comment>
<comment type="catalytic activity">
    <reaction>
        <text>L-threonyl-[receptor-protein] + ATP = O-phospho-L-threonyl-[receptor-protein] + ADP + H(+)</text>
        <dbReference type="Rhea" id="RHEA:44880"/>
        <dbReference type="Rhea" id="RHEA-COMP:11024"/>
        <dbReference type="Rhea" id="RHEA-COMP:11025"/>
        <dbReference type="ChEBI" id="CHEBI:15378"/>
        <dbReference type="ChEBI" id="CHEBI:30013"/>
        <dbReference type="ChEBI" id="CHEBI:30616"/>
        <dbReference type="ChEBI" id="CHEBI:61977"/>
        <dbReference type="ChEBI" id="CHEBI:456216"/>
        <dbReference type="EC" id="2.7.11.30"/>
    </reaction>
</comment>
<comment type="catalytic activity">
    <reaction>
        <text>L-seryl-[receptor-protein] + ATP = O-phospho-L-seryl-[receptor-protein] + ADP + H(+)</text>
        <dbReference type="Rhea" id="RHEA:18673"/>
        <dbReference type="Rhea" id="RHEA-COMP:11022"/>
        <dbReference type="Rhea" id="RHEA-COMP:11023"/>
        <dbReference type="ChEBI" id="CHEBI:15378"/>
        <dbReference type="ChEBI" id="CHEBI:29999"/>
        <dbReference type="ChEBI" id="CHEBI:30616"/>
        <dbReference type="ChEBI" id="CHEBI:83421"/>
        <dbReference type="ChEBI" id="CHEBI:456216"/>
        <dbReference type="EC" id="2.7.11.30"/>
    </reaction>
</comment>
<comment type="cofactor">
    <cofactor evidence="1">
        <name>Mg(2+)</name>
        <dbReference type="ChEBI" id="CHEBI:18420"/>
    </cofactor>
    <cofactor evidence="1">
        <name>Mn(2+)</name>
        <dbReference type="ChEBI" id="CHEBI:29035"/>
    </cofactor>
</comment>
<comment type="subunit">
    <text evidence="2">Interacts with TSC22D1/TSC-22.</text>
</comment>
<comment type="subcellular location">
    <subcellularLocation>
        <location evidence="2">Cell membrane</location>
        <topology evidence="3">Single-pass type I membrane protein</topology>
    </subcellularLocation>
</comment>
<comment type="tissue specificity">
    <text evidence="7">Urogenital ridge, testis, ovary, brain and lung. In lung, found exclusively in pulmonary vessels of all sizes. Also expressed in aorta, vena cava and certain blood vessels of kidney, spleen, heart and intestine. For most blood vessels, a higher level of expression is found in endothelium than in adjacent smooth muscle.</text>
</comment>
<comment type="similarity">
    <text evidence="8">Belongs to the protein kinase superfamily. TKL Ser/Thr protein kinase family. TGFB receptor subfamily.</text>
</comment>
<dbReference type="EC" id="2.7.11.30"/>
<dbReference type="EMBL" id="L36088">
    <property type="protein sequence ID" value="AAC37705.1"/>
    <property type="molecule type" value="mRNA"/>
</dbReference>
<dbReference type="EMBL" id="BC083173">
    <property type="protein sequence ID" value="AAH83173.1"/>
    <property type="molecule type" value="mRNA"/>
</dbReference>
<dbReference type="RefSeq" id="NP_071886.1">
    <property type="nucleotide sequence ID" value="NM_022441.2"/>
</dbReference>
<dbReference type="RefSeq" id="XP_006242365.1">
    <property type="nucleotide sequence ID" value="XM_006242303.3"/>
</dbReference>
<dbReference type="RefSeq" id="XP_006242366.1">
    <property type="nucleotide sequence ID" value="XM_006242304.3"/>
</dbReference>
<dbReference type="RefSeq" id="XP_006242367.1">
    <property type="nucleotide sequence ID" value="XM_006242305.3"/>
</dbReference>
<dbReference type="RefSeq" id="XP_008763895.1">
    <property type="nucleotide sequence ID" value="XM_008765673.2"/>
</dbReference>
<dbReference type="RefSeq" id="XP_017450156.1">
    <property type="nucleotide sequence ID" value="XM_017594667.1"/>
</dbReference>
<dbReference type="RefSeq" id="XP_017450157.1">
    <property type="nucleotide sequence ID" value="XM_017594668.1"/>
</dbReference>
<dbReference type="RefSeq" id="XP_038934369.1">
    <property type="nucleotide sequence ID" value="XM_039078441.1"/>
</dbReference>
<dbReference type="RefSeq" id="XP_038934371.1">
    <property type="nucleotide sequence ID" value="XM_039078443.2"/>
</dbReference>
<dbReference type="RefSeq" id="XP_038934372.1">
    <property type="nucleotide sequence ID" value="XM_039078444.2"/>
</dbReference>
<dbReference type="RefSeq" id="XP_038934373.1">
    <property type="nucleotide sequence ID" value="XM_039078445.1"/>
</dbReference>
<dbReference type="RefSeq" id="XP_038934374.1">
    <property type="nucleotide sequence ID" value="XM_039078446.1"/>
</dbReference>
<dbReference type="RefSeq" id="XP_038934375.1">
    <property type="nucleotide sequence ID" value="XM_039078447.2"/>
</dbReference>
<dbReference type="RefSeq" id="XP_038934376.1">
    <property type="nucleotide sequence ID" value="XM_039078448.1"/>
</dbReference>
<dbReference type="RefSeq" id="XP_063119078.1">
    <property type="nucleotide sequence ID" value="XM_063263008.1"/>
</dbReference>
<dbReference type="SMR" id="P80203"/>
<dbReference type="FunCoup" id="P80203">
    <property type="interactions" value="546"/>
</dbReference>
<dbReference type="STRING" id="10116.ENSRNOP00000072526"/>
<dbReference type="GlyCosmos" id="P80203">
    <property type="glycosylation" value="2 sites, No reported glycans"/>
</dbReference>
<dbReference type="GlyGen" id="P80203">
    <property type="glycosylation" value="2 sites"/>
</dbReference>
<dbReference type="iPTMnet" id="P80203"/>
<dbReference type="PhosphoSitePlus" id="P80203"/>
<dbReference type="PaxDb" id="10116-ENSRNOP00000008673"/>
<dbReference type="Ensembl" id="ENSRNOT00000008673.5">
    <property type="protein sequence ID" value="ENSRNOP00000008673.3"/>
    <property type="gene ID" value="ENSRNOG00000028713.7"/>
</dbReference>
<dbReference type="GeneID" id="25237"/>
<dbReference type="KEGG" id="rno:25237"/>
<dbReference type="UCSC" id="RGD:2029">
    <property type="organism name" value="rat"/>
</dbReference>
<dbReference type="AGR" id="RGD:2029"/>
<dbReference type="CTD" id="94"/>
<dbReference type="RGD" id="2029">
    <property type="gene designation" value="Acvrl1"/>
</dbReference>
<dbReference type="eggNOG" id="KOG2052">
    <property type="taxonomic scope" value="Eukaryota"/>
</dbReference>
<dbReference type="GeneTree" id="ENSGT00940000161446"/>
<dbReference type="HOGENOM" id="CLU_000288_8_1_1"/>
<dbReference type="InParanoid" id="P80203"/>
<dbReference type="OMA" id="TIHAENQ"/>
<dbReference type="OrthoDB" id="69842at2759"/>
<dbReference type="BRENDA" id="2.7.10.2">
    <property type="organism ID" value="5301"/>
</dbReference>
<dbReference type="Reactome" id="R-RNO-201451">
    <property type="pathway name" value="Signaling by BMP"/>
</dbReference>
<dbReference type="PRO" id="PR:P80203"/>
<dbReference type="Proteomes" id="UP000002494">
    <property type="component" value="Chromosome 7"/>
</dbReference>
<dbReference type="Bgee" id="ENSRNOG00000028713">
    <property type="expression patterns" value="Expressed in lung and 19 other cell types or tissues"/>
</dbReference>
<dbReference type="GO" id="GO:0070724">
    <property type="term" value="C:BMP receptor complex"/>
    <property type="evidence" value="ECO:0000318"/>
    <property type="project" value="GO_Central"/>
</dbReference>
<dbReference type="GO" id="GO:0009986">
    <property type="term" value="C:cell surface"/>
    <property type="evidence" value="ECO:0000314"/>
    <property type="project" value="RGD"/>
</dbReference>
<dbReference type="GO" id="GO:0030425">
    <property type="term" value="C:dendrite"/>
    <property type="evidence" value="ECO:0000314"/>
    <property type="project" value="RGD"/>
</dbReference>
<dbReference type="GO" id="GO:0043025">
    <property type="term" value="C:neuronal cell body"/>
    <property type="evidence" value="ECO:0000314"/>
    <property type="project" value="RGD"/>
</dbReference>
<dbReference type="GO" id="GO:0005886">
    <property type="term" value="C:plasma membrane"/>
    <property type="evidence" value="ECO:0000250"/>
    <property type="project" value="UniProtKB"/>
</dbReference>
<dbReference type="GO" id="GO:0048185">
    <property type="term" value="F:activin binding"/>
    <property type="evidence" value="ECO:0000266"/>
    <property type="project" value="RGD"/>
</dbReference>
<dbReference type="GO" id="GO:0016361">
    <property type="term" value="F:activin receptor activity, type I"/>
    <property type="evidence" value="ECO:0000266"/>
    <property type="project" value="RGD"/>
</dbReference>
<dbReference type="GO" id="GO:0005524">
    <property type="term" value="F:ATP binding"/>
    <property type="evidence" value="ECO:0000266"/>
    <property type="project" value="RGD"/>
</dbReference>
<dbReference type="GO" id="GO:0098821">
    <property type="term" value="F:BMP receptor activity"/>
    <property type="evidence" value="ECO:0000250"/>
    <property type="project" value="UniProtKB"/>
</dbReference>
<dbReference type="GO" id="GO:0046872">
    <property type="term" value="F:metal ion binding"/>
    <property type="evidence" value="ECO:0007669"/>
    <property type="project" value="UniProtKB-KW"/>
</dbReference>
<dbReference type="GO" id="GO:0019901">
    <property type="term" value="F:protein kinase binding"/>
    <property type="evidence" value="ECO:0000266"/>
    <property type="project" value="RGD"/>
</dbReference>
<dbReference type="GO" id="GO:0004674">
    <property type="term" value="F:protein serine/threonine kinase activity"/>
    <property type="evidence" value="ECO:0000266"/>
    <property type="project" value="RGD"/>
</dbReference>
<dbReference type="GO" id="GO:0046332">
    <property type="term" value="F:SMAD binding"/>
    <property type="evidence" value="ECO:0000266"/>
    <property type="project" value="RGD"/>
</dbReference>
<dbReference type="GO" id="GO:0050431">
    <property type="term" value="F:transforming growth factor beta binding"/>
    <property type="evidence" value="ECO:0000266"/>
    <property type="project" value="RGD"/>
</dbReference>
<dbReference type="GO" id="GO:0005024">
    <property type="term" value="F:transforming growth factor beta receptor activity"/>
    <property type="evidence" value="ECO:0000266"/>
    <property type="project" value="RGD"/>
</dbReference>
<dbReference type="GO" id="GO:0005025">
    <property type="term" value="F:transforming growth factor beta receptor activity, type I"/>
    <property type="evidence" value="ECO:0000266"/>
    <property type="project" value="RGD"/>
</dbReference>
<dbReference type="GO" id="GO:0004675">
    <property type="term" value="F:transmembrane receptor protein serine/threonine kinase activity"/>
    <property type="evidence" value="ECO:0000304"/>
    <property type="project" value="RGD"/>
</dbReference>
<dbReference type="GO" id="GO:0001525">
    <property type="term" value="P:angiogenesis"/>
    <property type="evidence" value="ECO:0000266"/>
    <property type="project" value="RGD"/>
</dbReference>
<dbReference type="GO" id="GO:0060840">
    <property type="term" value="P:artery development"/>
    <property type="evidence" value="ECO:0000266"/>
    <property type="project" value="RGD"/>
</dbReference>
<dbReference type="GO" id="GO:0008015">
    <property type="term" value="P:blood circulation"/>
    <property type="evidence" value="ECO:0000266"/>
    <property type="project" value="RGD"/>
</dbReference>
<dbReference type="GO" id="GO:0048514">
    <property type="term" value="P:blood vessel morphogenesis"/>
    <property type="evidence" value="ECO:0000266"/>
    <property type="project" value="RGD"/>
</dbReference>
<dbReference type="GO" id="GO:0001974">
    <property type="term" value="P:blood vessel remodeling"/>
    <property type="evidence" value="ECO:0000266"/>
    <property type="project" value="RGD"/>
</dbReference>
<dbReference type="GO" id="GO:0030509">
    <property type="term" value="P:BMP signaling pathway"/>
    <property type="evidence" value="ECO:0000266"/>
    <property type="project" value="RGD"/>
</dbReference>
<dbReference type="GO" id="GO:0030154">
    <property type="term" value="P:cell differentiation"/>
    <property type="evidence" value="ECO:0000318"/>
    <property type="project" value="GO_Central"/>
</dbReference>
<dbReference type="GO" id="GO:0071773">
    <property type="term" value="P:cellular response to BMP stimulus"/>
    <property type="evidence" value="ECO:0000266"/>
    <property type="project" value="RGD"/>
</dbReference>
<dbReference type="GO" id="GO:0071363">
    <property type="term" value="P:cellular response to growth factor stimulus"/>
    <property type="evidence" value="ECO:0000318"/>
    <property type="project" value="GO_Central"/>
</dbReference>
<dbReference type="GO" id="GO:0071560">
    <property type="term" value="P:cellular response to transforming growth factor beta stimulus"/>
    <property type="evidence" value="ECO:0000266"/>
    <property type="project" value="RGD"/>
</dbReference>
<dbReference type="GO" id="GO:0035912">
    <property type="term" value="P:dorsal aorta morphogenesis"/>
    <property type="evidence" value="ECO:0000266"/>
    <property type="project" value="RGD"/>
</dbReference>
<dbReference type="GO" id="GO:0009953">
    <property type="term" value="P:dorsal/ventral pattern formation"/>
    <property type="evidence" value="ECO:0000318"/>
    <property type="project" value="GO_Central"/>
</dbReference>
<dbReference type="GO" id="GO:0003203">
    <property type="term" value="P:endocardial cushion morphogenesis"/>
    <property type="evidence" value="ECO:0000266"/>
    <property type="project" value="RGD"/>
</dbReference>
<dbReference type="GO" id="GO:0061154">
    <property type="term" value="P:endothelial tube morphogenesis"/>
    <property type="evidence" value="ECO:0000266"/>
    <property type="project" value="RGD"/>
</dbReference>
<dbReference type="GO" id="GO:0007507">
    <property type="term" value="P:heart development"/>
    <property type="evidence" value="ECO:0000318"/>
    <property type="project" value="GO_Central"/>
</dbReference>
<dbReference type="GO" id="GO:0001701">
    <property type="term" value="P:in utero embryonic development"/>
    <property type="evidence" value="ECO:0000266"/>
    <property type="project" value="RGD"/>
</dbReference>
<dbReference type="GO" id="GO:0001946">
    <property type="term" value="P:lymphangiogenesis"/>
    <property type="evidence" value="ECO:0000266"/>
    <property type="project" value="RGD"/>
</dbReference>
<dbReference type="GO" id="GO:0060836">
    <property type="term" value="P:lymphatic endothelial cell differentiation"/>
    <property type="evidence" value="ECO:0000266"/>
    <property type="project" value="RGD"/>
</dbReference>
<dbReference type="GO" id="GO:0043537">
    <property type="term" value="P:negative regulation of blood vessel endothelial cell migration"/>
    <property type="evidence" value="ECO:0000266"/>
    <property type="project" value="RGD"/>
</dbReference>
<dbReference type="GO" id="GO:0007162">
    <property type="term" value="P:negative regulation of cell adhesion"/>
    <property type="evidence" value="ECO:0000266"/>
    <property type="project" value="RGD"/>
</dbReference>
<dbReference type="GO" id="GO:0030308">
    <property type="term" value="P:negative regulation of cell growth"/>
    <property type="evidence" value="ECO:0000266"/>
    <property type="project" value="RGD"/>
</dbReference>
<dbReference type="GO" id="GO:0030336">
    <property type="term" value="P:negative regulation of cell migration"/>
    <property type="evidence" value="ECO:0000266"/>
    <property type="project" value="RGD"/>
</dbReference>
<dbReference type="GO" id="GO:0008285">
    <property type="term" value="P:negative regulation of cell population proliferation"/>
    <property type="evidence" value="ECO:0000266"/>
    <property type="project" value="RGD"/>
</dbReference>
<dbReference type="GO" id="GO:0045602">
    <property type="term" value="P:negative regulation of endothelial cell differentiation"/>
    <property type="evidence" value="ECO:0000266"/>
    <property type="project" value="RGD"/>
</dbReference>
<dbReference type="GO" id="GO:0010596">
    <property type="term" value="P:negative regulation of endothelial cell migration"/>
    <property type="evidence" value="ECO:0000266"/>
    <property type="project" value="RGD"/>
</dbReference>
<dbReference type="GO" id="GO:0001937">
    <property type="term" value="P:negative regulation of endothelial cell proliferation"/>
    <property type="evidence" value="ECO:0000266"/>
    <property type="project" value="RGD"/>
</dbReference>
<dbReference type="GO" id="GO:0051895">
    <property type="term" value="P:negative regulation of focal adhesion assembly"/>
    <property type="evidence" value="ECO:0000266"/>
    <property type="project" value="RGD"/>
</dbReference>
<dbReference type="GO" id="GO:0010629">
    <property type="term" value="P:negative regulation of gene expression"/>
    <property type="evidence" value="ECO:0000266"/>
    <property type="project" value="RGD"/>
</dbReference>
<dbReference type="GO" id="GO:0045766">
    <property type="term" value="P:positive regulation of angiogenesis"/>
    <property type="evidence" value="ECO:0000266"/>
    <property type="project" value="RGD"/>
</dbReference>
<dbReference type="GO" id="GO:1903348">
    <property type="term" value="P:positive regulation of bicellular tight junction assembly"/>
    <property type="evidence" value="ECO:0000266"/>
    <property type="project" value="RGD"/>
</dbReference>
<dbReference type="GO" id="GO:0030513">
    <property type="term" value="P:positive regulation of BMP signaling pathway"/>
    <property type="evidence" value="ECO:0000266"/>
    <property type="project" value="RGD"/>
</dbReference>
<dbReference type="GO" id="GO:0045893">
    <property type="term" value="P:positive regulation of DNA-templated transcription"/>
    <property type="evidence" value="ECO:0000266"/>
    <property type="project" value="RGD"/>
</dbReference>
<dbReference type="GO" id="GO:0045603">
    <property type="term" value="P:positive regulation of endothelial cell differentiation"/>
    <property type="evidence" value="ECO:0000266"/>
    <property type="project" value="RGD"/>
</dbReference>
<dbReference type="GO" id="GO:0001938">
    <property type="term" value="P:positive regulation of endothelial cell proliferation"/>
    <property type="evidence" value="ECO:0000266"/>
    <property type="project" value="RGD"/>
</dbReference>
<dbReference type="GO" id="GO:0030858">
    <property type="term" value="P:positive regulation of epithelial cell differentiation"/>
    <property type="evidence" value="ECO:0000266"/>
    <property type="project" value="RGD"/>
</dbReference>
<dbReference type="GO" id="GO:0045747">
    <property type="term" value="P:positive regulation of Notch signaling pathway"/>
    <property type="evidence" value="ECO:0000266"/>
    <property type="project" value="RGD"/>
</dbReference>
<dbReference type="GO" id="GO:0060391">
    <property type="term" value="P:positive regulation of SMAD protein signal transduction"/>
    <property type="evidence" value="ECO:0000266"/>
    <property type="project" value="RGD"/>
</dbReference>
<dbReference type="GO" id="GO:0045944">
    <property type="term" value="P:positive regulation of transcription by RNA polymerase II"/>
    <property type="evidence" value="ECO:0000266"/>
    <property type="project" value="RGD"/>
</dbReference>
<dbReference type="GO" id="GO:0008217">
    <property type="term" value="P:regulation of blood pressure"/>
    <property type="evidence" value="ECO:0000266"/>
    <property type="project" value="RGD"/>
</dbReference>
<dbReference type="GO" id="GO:0006355">
    <property type="term" value="P:regulation of DNA-templated transcription"/>
    <property type="evidence" value="ECO:0000266"/>
    <property type="project" value="RGD"/>
</dbReference>
<dbReference type="GO" id="GO:0001666">
    <property type="term" value="P:response to hypoxia"/>
    <property type="evidence" value="ECO:0000270"/>
    <property type="project" value="RGD"/>
</dbReference>
<dbReference type="GO" id="GO:0061298">
    <property type="term" value="P:retina vasculature development in camera-type eye"/>
    <property type="evidence" value="ECO:0000266"/>
    <property type="project" value="RGD"/>
</dbReference>
<dbReference type="GO" id="GO:0007165">
    <property type="term" value="P:signal transduction"/>
    <property type="evidence" value="ECO:0000266"/>
    <property type="project" value="RGD"/>
</dbReference>
<dbReference type="GO" id="GO:0007179">
    <property type="term" value="P:transforming growth factor beta receptor signaling pathway"/>
    <property type="evidence" value="ECO:0000266"/>
    <property type="project" value="RGD"/>
</dbReference>
<dbReference type="GO" id="GO:0060841">
    <property type="term" value="P:venous blood vessel development"/>
    <property type="evidence" value="ECO:0000266"/>
    <property type="project" value="RGD"/>
</dbReference>
<dbReference type="GO" id="GO:0035313">
    <property type="term" value="P:wound healing, spreading of epidermal cells"/>
    <property type="evidence" value="ECO:0000266"/>
    <property type="project" value="RGD"/>
</dbReference>
<dbReference type="CDD" id="cd14142">
    <property type="entry name" value="STKc_ACVR1_ALK1"/>
    <property type="match status" value="1"/>
</dbReference>
<dbReference type="CDD" id="cd23534">
    <property type="entry name" value="TFP_LU_ECD_ALK1"/>
    <property type="match status" value="1"/>
</dbReference>
<dbReference type="FunFam" id="1.10.510.10:FF:000018">
    <property type="entry name" value="Receptor protein serine/threonine kinase"/>
    <property type="match status" value="1"/>
</dbReference>
<dbReference type="FunFam" id="3.30.200.20:FF:000064">
    <property type="entry name" value="Receptor protein serine/threonine kinase"/>
    <property type="match status" value="1"/>
</dbReference>
<dbReference type="FunFam" id="2.10.60.10:FF:000014">
    <property type="entry name" value="Serine/threonine-protein kinase receptor R3"/>
    <property type="match status" value="1"/>
</dbReference>
<dbReference type="Gene3D" id="2.10.60.10">
    <property type="entry name" value="CD59"/>
    <property type="match status" value="1"/>
</dbReference>
<dbReference type="Gene3D" id="3.30.200.20">
    <property type="entry name" value="Phosphorylase Kinase, domain 1"/>
    <property type="match status" value="1"/>
</dbReference>
<dbReference type="Gene3D" id="1.10.510.10">
    <property type="entry name" value="Transferase(Phosphotransferase) domain 1"/>
    <property type="match status" value="1"/>
</dbReference>
<dbReference type="InterPro" id="IPR003605">
    <property type="entry name" value="GS_dom"/>
</dbReference>
<dbReference type="InterPro" id="IPR011009">
    <property type="entry name" value="Kinase-like_dom_sf"/>
</dbReference>
<dbReference type="InterPro" id="IPR000719">
    <property type="entry name" value="Prot_kinase_dom"/>
</dbReference>
<dbReference type="InterPro" id="IPR017441">
    <property type="entry name" value="Protein_kinase_ATP_BS"/>
</dbReference>
<dbReference type="InterPro" id="IPR001245">
    <property type="entry name" value="Ser-Thr/Tyr_kinase_cat_dom"/>
</dbReference>
<dbReference type="InterPro" id="IPR008271">
    <property type="entry name" value="Ser/Thr_kinase_AS"/>
</dbReference>
<dbReference type="InterPro" id="IPR045860">
    <property type="entry name" value="Snake_toxin-like_sf"/>
</dbReference>
<dbReference type="InterPro" id="IPR000333">
    <property type="entry name" value="TGFB_receptor"/>
</dbReference>
<dbReference type="PANTHER" id="PTHR23255:SF66">
    <property type="entry name" value="SERINE_THREONINE-PROTEIN KINASE RECEPTOR R3"/>
    <property type="match status" value="1"/>
</dbReference>
<dbReference type="PANTHER" id="PTHR23255">
    <property type="entry name" value="TRANSFORMING GROWTH FACTOR-BETA RECEPTOR TYPE I AND II"/>
    <property type="match status" value="1"/>
</dbReference>
<dbReference type="Pfam" id="PF07714">
    <property type="entry name" value="PK_Tyr_Ser-Thr"/>
    <property type="match status" value="1"/>
</dbReference>
<dbReference type="Pfam" id="PF08515">
    <property type="entry name" value="TGF_beta_GS"/>
    <property type="match status" value="1"/>
</dbReference>
<dbReference type="SMART" id="SM00467">
    <property type="entry name" value="GS"/>
    <property type="match status" value="1"/>
</dbReference>
<dbReference type="SMART" id="SM00220">
    <property type="entry name" value="S_TKc"/>
    <property type="match status" value="1"/>
</dbReference>
<dbReference type="SUPFAM" id="SSF56112">
    <property type="entry name" value="Protein kinase-like (PK-like)"/>
    <property type="match status" value="1"/>
</dbReference>
<dbReference type="SUPFAM" id="SSF57302">
    <property type="entry name" value="Snake toxin-like"/>
    <property type="match status" value="1"/>
</dbReference>
<dbReference type="PROSITE" id="PS51256">
    <property type="entry name" value="GS"/>
    <property type="match status" value="1"/>
</dbReference>
<dbReference type="PROSITE" id="PS00107">
    <property type="entry name" value="PROTEIN_KINASE_ATP"/>
    <property type="match status" value="1"/>
</dbReference>
<dbReference type="PROSITE" id="PS50011">
    <property type="entry name" value="PROTEIN_KINASE_DOM"/>
    <property type="match status" value="1"/>
</dbReference>
<dbReference type="PROSITE" id="PS00108">
    <property type="entry name" value="PROTEIN_KINASE_ST"/>
    <property type="match status" value="1"/>
</dbReference>
<reference key="1">
    <citation type="journal article" date="1993" name="Dev. Dyn.">
        <title>Developmental expression of four novel serine/threonine kinase receptors homologous to the activin/transforming growth factor-beta type II receptor family.</title>
        <authorList>
            <person name="He W.-W."/>
            <person name="Gustafson M.L."/>
            <person name="Hirobe S."/>
            <person name="Donahoe P.K."/>
        </authorList>
    </citation>
    <scope>NUCLEOTIDE SEQUENCE [MRNA]</scope>
    <source>
        <strain>Sprague-Dawley</strain>
        <tissue>Urogenital ridge</tissue>
    </source>
</reference>
<reference key="2">
    <citation type="journal article" date="1996" name="Am. J. Physiol.">
        <title>Type I receptor serine-threonine kinase preferentially expressed in pulmonary blood vessels.</title>
        <authorList>
            <person name="Panchenko M.P."/>
            <person name="Williams M.C."/>
            <person name="Brody J.S."/>
            <person name="Yu Q."/>
        </authorList>
    </citation>
    <scope>NUCLEOTIDE SEQUENCE [MRNA]</scope>
    <scope>TISSUE SPECIFICITY</scope>
    <source>
        <strain>Sprague-Dawley</strain>
        <tissue>Lung</tissue>
    </source>
</reference>
<reference key="3">
    <citation type="journal article" date="2004" name="Genome Res.">
        <title>The status, quality, and expansion of the NIH full-length cDNA project: the Mammalian Gene Collection (MGC).</title>
        <authorList>
            <consortium name="The MGC Project Team"/>
        </authorList>
    </citation>
    <scope>NUCLEOTIDE SEQUENCE [LARGE SCALE MRNA]</scope>
    <source>
        <tissue>Lung</tissue>
    </source>
</reference>
<reference key="4">
    <citation type="journal article" date="2012" name="Nat. Commun.">
        <title>Quantitative maps of protein phosphorylation sites across 14 different rat organs and tissues.</title>
        <authorList>
            <person name="Lundby A."/>
            <person name="Secher A."/>
            <person name="Lage K."/>
            <person name="Nordsborg N.B."/>
            <person name="Dmytriyev A."/>
            <person name="Lundby C."/>
            <person name="Olsen J.V."/>
        </authorList>
    </citation>
    <scope>PHOSPHORYLATION [LARGE SCALE ANALYSIS] AT SER-156; SER-161 AND SER-162</scope>
    <scope>IDENTIFICATION BY MASS SPECTROMETRY [LARGE SCALE ANALYSIS]</scope>
</reference>
<feature type="signal peptide" evidence="3">
    <location>
        <begin position="1"/>
        <end position="20"/>
    </location>
</feature>
<feature type="chain" id="PRO_0000024422" description="Activin receptor type-1-like">
    <location>
        <begin position="21"/>
        <end position="504"/>
    </location>
</feature>
<feature type="topological domain" description="Extracellular" evidence="3">
    <location>
        <begin position="21"/>
        <end position="121"/>
    </location>
</feature>
<feature type="transmembrane region" description="Helical" evidence="3">
    <location>
        <begin position="122"/>
        <end position="142"/>
    </location>
</feature>
<feature type="topological domain" description="Cytoplasmic" evidence="3">
    <location>
        <begin position="143"/>
        <end position="504"/>
    </location>
</feature>
<feature type="domain" description="GS" evidence="5">
    <location>
        <begin position="173"/>
        <end position="202"/>
    </location>
</feature>
<feature type="domain" description="Protein kinase" evidence="4">
    <location>
        <begin position="203"/>
        <end position="504"/>
    </location>
</feature>
<feature type="region of interest" description="Mediates specificity for BMP ligand" evidence="1">
    <location>
        <begin position="74"/>
        <end position="77"/>
    </location>
</feature>
<feature type="active site" description="Proton acceptor" evidence="4 6">
    <location>
        <position position="331"/>
    </location>
</feature>
<feature type="binding site" evidence="4">
    <location>
        <begin position="209"/>
        <end position="217"/>
    </location>
    <ligand>
        <name>ATP</name>
        <dbReference type="ChEBI" id="CHEBI:30616"/>
    </ligand>
</feature>
<feature type="binding site" evidence="4">
    <location>
        <position position="230"/>
    </location>
    <ligand>
        <name>ATP</name>
        <dbReference type="ChEBI" id="CHEBI:30616"/>
    </ligand>
</feature>
<feature type="modified residue" description="Phosphoserine" evidence="9">
    <location>
        <position position="156"/>
    </location>
</feature>
<feature type="modified residue" description="Phosphoserine" evidence="9">
    <location>
        <position position="161"/>
    </location>
</feature>
<feature type="modified residue" description="Phosphoserine" evidence="9">
    <location>
        <position position="162"/>
    </location>
</feature>
<feature type="glycosylation site" description="N-linked (GlcNAc...) asparagine" evidence="3">
    <location>
        <position position="34"/>
    </location>
</feature>
<feature type="glycosylation site" description="N-linked (GlcNAc...) asparagine" evidence="3">
    <location>
        <position position="99"/>
    </location>
</feature>
<feature type="disulfide bond" evidence="2">
    <location>
        <begin position="35"/>
        <end position="52"/>
    </location>
</feature>
<feature type="disulfide bond" evidence="2">
    <location>
        <begin position="37"/>
        <end position="42"/>
    </location>
</feature>
<feature type="disulfide bond" evidence="2">
    <location>
        <begin position="47"/>
        <end position="70"/>
    </location>
</feature>
<feature type="disulfide bond" evidence="2">
    <location>
        <begin position="78"/>
        <end position="90"/>
    </location>
</feature>
<feature type="disulfide bond" evidence="2">
    <location>
        <begin position="91"/>
        <end position="96"/>
    </location>
</feature>
<feature type="sequence conflict" description="In Ref. 1." evidence="8" ref="1">
    <original>C</original>
    <variation>CA</variation>
    <location>
        <position position="309"/>
    </location>
</feature>